<accession>Q2VR06</accession>
<accession>A0A1L8FTJ3</accession>
<gene>
    <name evidence="1" type="primary">cibar1-a</name>
    <name type="synonym">fam921.S</name>
    <name type="synonym">fam92a1-a</name>
</gene>
<organism>
    <name type="scientific">Xenopus laevis</name>
    <name type="common">African clawed frog</name>
    <dbReference type="NCBI Taxonomy" id="8355"/>
    <lineage>
        <taxon>Eukaryota</taxon>
        <taxon>Metazoa</taxon>
        <taxon>Chordata</taxon>
        <taxon>Craniata</taxon>
        <taxon>Vertebrata</taxon>
        <taxon>Euteleostomi</taxon>
        <taxon>Amphibia</taxon>
        <taxon>Batrachia</taxon>
        <taxon>Anura</taxon>
        <taxon>Pipoidea</taxon>
        <taxon>Pipidae</taxon>
        <taxon>Xenopodinae</taxon>
        <taxon>Xenopus</taxon>
        <taxon>Xenopus</taxon>
    </lineage>
</organism>
<evidence type="ECO:0000250" key="1">
    <source>
        <dbReference type="UniProtKB" id="A1XBS5"/>
    </source>
</evidence>
<evidence type="ECO:0000250" key="2">
    <source>
        <dbReference type="UniProtKB" id="Q8BP22"/>
    </source>
</evidence>
<evidence type="ECO:0000255" key="3"/>
<evidence type="ECO:0000256" key="4">
    <source>
        <dbReference type="SAM" id="MobiDB-lite"/>
    </source>
</evidence>
<evidence type="ECO:0000305" key="5"/>
<comment type="function">
    <text evidence="1 2">Plays a critical role in regulating mitochondrial ultrastructure and function by maintaining the integrity of mitochondrial morphology, particularly the organization of cristae (By similarity). Plays a crucial role in ciliogenesis (By similarity). Plays a key role in the correct positioning of the annulus, a septin-based ring structure in the sperm flagellum, serving both as a physical barrier and a membrane diffusion barrier that separates the midpiece (MP) from the principal piece (PP) (By similarity).</text>
</comment>
<comment type="subcellular location">
    <subcellularLocation>
        <location evidence="1">Cytoplasm</location>
    </subcellularLocation>
    <subcellularLocation>
        <location evidence="1">Cytoplasm</location>
        <location evidence="1">Cytoskeleton</location>
        <location evidence="1">Microtubule organizing center</location>
        <location evidence="1">Centrosome</location>
        <location evidence="1">Centriole</location>
    </subcellularLocation>
    <subcellularLocation>
        <location evidence="1">Nucleus</location>
    </subcellularLocation>
    <subcellularLocation>
        <location evidence="1">Mitochondrion inner membrane</location>
        <topology evidence="1">Peripheral membrane protein</topology>
        <orientation evidence="1">Matrix side</orientation>
    </subcellularLocation>
    <subcellularLocation>
        <location evidence="2">Cell projection</location>
        <location evidence="2">Cilium</location>
        <location evidence="2">Flagellum</location>
    </subcellularLocation>
</comment>
<comment type="domain">
    <text evidence="1">The BAR-like domain displays limited similarity to other BAR domains.</text>
</comment>
<comment type="similarity">
    <text evidence="5">Belongs to the CIBAR family.</text>
</comment>
<keyword id="KW-0966">Cell projection</keyword>
<keyword id="KW-0969">Cilium</keyword>
<keyword id="KW-0970">Cilium biogenesis/degradation</keyword>
<keyword id="KW-0175">Coiled coil</keyword>
<keyword id="KW-0963">Cytoplasm</keyword>
<keyword id="KW-0206">Cytoskeleton</keyword>
<keyword id="KW-0221">Differentiation</keyword>
<keyword id="KW-0282">Flagellum</keyword>
<keyword id="KW-0472">Membrane</keyword>
<keyword id="KW-0496">Mitochondrion</keyword>
<keyword id="KW-0999">Mitochondrion inner membrane</keyword>
<keyword id="KW-0539">Nucleus</keyword>
<keyword id="KW-1185">Reference proteome</keyword>
<keyword id="KW-0744">Spermatogenesis</keyword>
<keyword id="KW-0809">Transit peptide</keyword>
<proteinExistence type="evidence at transcript level"/>
<sequence>MSQTPEARARDNQTRQIQESVNNVEKHFGELCQIFAGYVRKTARLRDKADLLVREVNTYADTETPTVKLGLKNFADELAKLQDYRQAEVERLESRVVEPLKSYGSIIKLKREDLKVTLTARNREAKQMAQLEKTRQRNPSDRQIISQAETELQRATMDASRISQQLEETIDNFEKQKMKDIKKLFTEFVSIEMVFHGKALEVLTAAYQHIQDIDEEEDLEVFRNSLHPPDFQSRLDIVRANSRTGSTSRGPSVISQPPGNRQKNRIEDEDEEEEDDENSTEDEN</sequence>
<protein>
    <recommendedName>
        <fullName evidence="1">CBY1-interacting BAR domain-containing protein 1-A</fullName>
    </recommendedName>
</protein>
<reference key="1">
    <citation type="submission" date="2004-12" db="EMBL/GenBank/DDBJ databases">
        <title>Full-length sequence of CV973659.</title>
        <authorList>
            <person name="Yang H.S."/>
            <person name="Ruan X.Z."/>
            <person name="Deng H.X."/>
        </authorList>
    </citation>
    <scope>NUCLEOTIDE SEQUENCE [MRNA]</scope>
</reference>
<reference key="2">
    <citation type="journal article" date="2016" name="Nature">
        <title>Genome evolution in the allotetraploid frog Xenopus laevis.</title>
        <authorList>
            <person name="Session A.M."/>
            <person name="Uno Y."/>
            <person name="Kwon T."/>
            <person name="Chapman J.A."/>
            <person name="Toyoda A."/>
            <person name="Takahashi S."/>
            <person name="Fukui A."/>
            <person name="Hikosaka A."/>
            <person name="Suzuki A."/>
            <person name="Kondo M."/>
            <person name="van Heeringen S.J."/>
            <person name="Quigley I."/>
            <person name="Heinz S."/>
            <person name="Ogino H."/>
            <person name="Ochi H."/>
            <person name="Hellsten U."/>
            <person name="Lyons J.B."/>
            <person name="Simakov O."/>
            <person name="Putnam N."/>
            <person name="Stites J."/>
            <person name="Kuroki Y."/>
            <person name="Tanaka T."/>
            <person name="Michiue T."/>
            <person name="Watanabe M."/>
            <person name="Bogdanovic O."/>
            <person name="Lister R."/>
            <person name="Georgiou G."/>
            <person name="Paranjpe S.S."/>
            <person name="van Kruijsbergen I."/>
            <person name="Shu S."/>
            <person name="Carlson J."/>
            <person name="Kinoshita T."/>
            <person name="Ohta Y."/>
            <person name="Mawaribuchi S."/>
            <person name="Jenkins J."/>
            <person name="Grimwood J."/>
            <person name="Schmutz J."/>
            <person name="Mitros T."/>
            <person name="Mozaffari S.V."/>
            <person name="Suzuki Y."/>
            <person name="Haramoto Y."/>
            <person name="Yamamoto T.S."/>
            <person name="Takagi C."/>
            <person name="Heald R."/>
            <person name="Miller K."/>
            <person name="Haudenschild C."/>
            <person name="Kitzman J."/>
            <person name="Nakayama T."/>
            <person name="Izutsu Y."/>
            <person name="Robert J."/>
            <person name="Fortriede J."/>
            <person name="Burns K."/>
            <person name="Lotay V."/>
            <person name="Karimi K."/>
            <person name="Yasuoka Y."/>
            <person name="Dichmann D.S."/>
            <person name="Flajnik M.F."/>
            <person name="Houston D.W."/>
            <person name="Shendure J."/>
            <person name="DuPasquier L."/>
            <person name="Vize P.D."/>
            <person name="Zorn A.M."/>
            <person name="Ito M."/>
            <person name="Marcotte E.M."/>
            <person name="Wallingford J.B."/>
            <person name="Ito Y."/>
            <person name="Asashima M."/>
            <person name="Ueno N."/>
            <person name="Matsuda Y."/>
            <person name="Veenstra G.J."/>
            <person name="Fujiyama A."/>
            <person name="Harland R.M."/>
            <person name="Taira M."/>
            <person name="Rokhsar D.S."/>
        </authorList>
    </citation>
    <scope>NUCLEOTIDE SEQUENCE [LARGE SCALE GENOMIC DNA]</scope>
</reference>
<name>CBR1A_XENLA</name>
<dbReference type="EMBL" id="AY855078">
    <property type="protein sequence ID" value="AAX47337.1"/>
    <property type="molecule type" value="mRNA"/>
</dbReference>
<dbReference type="EMBL" id="CM004477">
    <property type="protein sequence ID" value="OCT74888.1"/>
    <property type="molecule type" value="Genomic_DNA"/>
</dbReference>
<dbReference type="RefSeq" id="NP_001089128.1">
    <property type="nucleotide sequence ID" value="NM_001095659.1"/>
</dbReference>
<dbReference type="SMR" id="Q2VR06"/>
<dbReference type="STRING" id="8355.Q2VR06"/>
<dbReference type="PaxDb" id="8355-Q2VR06"/>
<dbReference type="GeneID" id="733428"/>
<dbReference type="KEGG" id="xla:733428"/>
<dbReference type="AGR" id="Xenbase:XB-GENE-17343261"/>
<dbReference type="CTD" id="733428"/>
<dbReference type="Xenbase" id="XB-GENE-17343261">
    <property type="gene designation" value="cibar1.S"/>
</dbReference>
<dbReference type="OMA" id="MNDRINF"/>
<dbReference type="OrthoDB" id="60621at2759"/>
<dbReference type="Proteomes" id="UP000186698">
    <property type="component" value="Chromosome 6S"/>
</dbReference>
<dbReference type="Proteomes" id="UP000694892">
    <property type="component" value="Chromosome 6S"/>
</dbReference>
<dbReference type="Bgee" id="733428">
    <property type="expression patterns" value="Expressed in zone of skin and 19 other cell types or tissues"/>
</dbReference>
<dbReference type="GO" id="GO:0005814">
    <property type="term" value="C:centriole"/>
    <property type="evidence" value="ECO:0007669"/>
    <property type="project" value="UniProtKB-SubCell"/>
</dbReference>
<dbReference type="GO" id="GO:0036064">
    <property type="term" value="C:ciliary basal body"/>
    <property type="evidence" value="ECO:0000318"/>
    <property type="project" value="GO_Central"/>
</dbReference>
<dbReference type="GO" id="GO:0097546">
    <property type="term" value="C:ciliary base"/>
    <property type="evidence" value="ECO:0000250"/>
    <property type="project" value="UniProtKB"/>
</dbReference>
<dbReference type="GO" id="GO:0035869">
    <property type="term" value="C:ciliary transition zone"/>
    <property type="evidence" value="ECO:0000318"/>
    <property type="project" value="GO_Central"/>
</dbReference>
<dbReference type="GO" id="GO:0005929">
    <property type="term" value="C:cilium"/>
    <property type="evidence" value="ECO:0000250"/>
    <property type="project" value="UniProtKB"/>
</dbReference>
<dbReference type="GO" id="GO:0005737">
    <property type="term" value="C:cytoplasm"/>
    <property type="evidence" value="ECO:0000250"/>
    <property type="project" value="UniProtKB"/>
</dbReference>
<dbReference type="GO" id="GO:0005743">
    <property type="term" value="C:mitochondrial inner membrane"/>
    <property type="evidence" value="ECO:0000250"/>
    <property type="project" value="UniProtKB"/>
</dbReference>
<dbReference type="GO" id="GO:0005634">
    <property type="term" value="C:nucleus"/>
    <property type="evidence" value="ECO:0000250"/>
    <property type="project" value="UniProtKB"/>
</dbReference>
<dbReference type="GO" id="GO:0097227">
    <property type="term" value="C:sperm annulus"/>
    <property type="evidence" value="ECO:0000250"/>
    <property type="project" value="UniProtKB"/>
</dbReference>
<dbReference type="GO" id="GO:0060271">
    <property type="term" value="P:cilium assembly"/>
    <property type="evidence" value="ECO:0000250"/>
    <property type="project" value="UniProtKB"/>
</dbReference>
<dbReference type="GO" id="GO:0007007">
    <property type="term" value="P:inner mitochondrial membrane organization"/>
    <property type="evidence" value="ECO:0000250"/>
    <property type="project" value="UniProtKB"/>
</dbReference>
<dbReference type="GO" id="GO:0045880">
    <property type="term" value="P:positive regulation of smoothened signaling pathway"/>
    <property type="evidence" value="ECO:0000250"/>
    <property type="project" value="UniProtKB"/>
</dbReference>
<dbReference type="GO" id="GO:0007283">
    <property type="term" value="P:spermatogenesis"/>
    <property type="evidence" value="ECO:0000250"/>
    <property type="project" value="UniProtKB"/>
</dbReference>
<dbReference type="CDD" id="cd07598">
    <property type="entry name" value="BAR_FAM92"/>
    <property type="match status" value="1"/>
</dbReference>
<dbReference type="FunFam" id="1.20.1270.60:FF:000047">
    <property type="entry name" value="protein FAM92A isoform X1"/>
    <property type="match status" value="1"/>
</dbReference>
<dbReference type="Gene3D" id="1.20.1270.60">
    <property type="entry name" value="Arfaptin homology (AH) domain/BAR domain"/>
    <property type="match status" value="1"/>
</dbReference>
<dbReference type="InterPro" id="IPR027267">
    <property type="entry name" value="AH/BAR_dom_sf"/>
</dbReference>
<dbReference type="InterPro" id="IPR035590">
    <property type="entry name" value="BAR_CBAR1/2"/>
</dbReference>
<dbReference type="InterPro" id="IPR009602">
    <property type="entry name" value="CBAR/FAM92"/>
</dbReference>
<dbReference type="PANTHER" id="PTHR21223:SF4">
    <property type="entry name" value="CBY1-INTERACTING BAR DOMAIN-CONTAINING PROTEIN 1"/>
    <property type="match status" value="1"/>
</dbReference>
<dbReference type="PANTHER" id="PTHR21223">
    <property type="entry name" value="CBY1-INTERACTING BAR DOMAIN-CONTAINING PROTEIN HOMOLOG"/>
    <property type="match status" value="1"/>
</dbReference>
<dbReference type="Pfam" id="PF06730">
    <property type="entry name" value="FAM92"/>
    <property type="match status" value="1"/>
</dbReference>
<dbReference type="SUPFAM" id="SSF103657">
    <property type="entry name" value="BAR/IMD domain-like"/>
    <property type="match status" value="1"/>
</dbReference>
<feature type="transit peptide" description="Mitochondrion" evidence="1">
    <location>
        <begin position="1"/>
        <end position="48"/>
    </location>
</feature>
<feature type="chain" id="PRO_0000287083" description="CBY1-interacting BAR domain-containing protein 1-A">
    <location>
        <begin position="49"/>
        <end position="284"/>
    </location>
</feature>
<feature type="region of interest" description="BAR-like" evidence="1">
    <location>
        <begin position="11"/>
        <end position="221"/>
    </location>
</feature>
<feature type="region of interest" description="Disordered" evidence="4">
    <location>
        <begin position="242"/>
        <end position="284"/>
    </location>
</feature>
<feature type="coiled-coil region" evidence="3">
    <location>
        <begin position="142"/>
        <end position="184"/>
    </location>
</feature>
<feature type="coiled-coil region" evidence="3">
    <location>
        <begin position="260"/>
        <end position="284"/>
    </location>
</feature>
<feature type="compositionally biased region" description="Polar residues" evidence="4">
    <location>
        <begin position="242"/>
        <end position="261"/>
    </location>
</feature>
<feature type="compositionally biased region" description="Acidic residues" evidence="4">
    <location>
        <begin position="267"/>
        <end position="284"/>
    </location>
</feature>